<gene>
    <name evidence="1" type="primary">thrB</name>
    <name type="ordered locus">BURPS1710b_A0859</name>
</gene>
<accession>Q3JK86</accession>
<proteinExistence type="inferred from homology"/>
<sequence length="331" mass="36759">MAVFTAVSNADLALWMRHYDLGDVVAFRGIPSGIENSNFFLTTTRGEYVLTIFENLTAGQLPFYVDLMSHLAKHGVPVPAPVARDDGTLFGELHGKPAAIVTKLEGAAQLAPGVEHCVEVGQMLARMHLAGRDYPRHQPNLRSLPWWRDTVPAIAPFVTGEQRALLEGELAHQAAFFASDDYAALPEGPCHCDLFRDNALFAHAEPDTGHSVRLGGFFDFYFAGCDKWLFDVAVTVNDWCVDLPTGALDAARADALLRAYQTVRPFTAGERRHWGDMLRAGAYRFWVSRLYDFHLPRAAQMLKPHDPGHFERILRERIAHAGALPETHACN</sequence>
<dbReference type="EC" id="2.7.1.39" evidence="1"/>
<dbReference type="EMBL" id="CP000125">
    <property type="protein sequence ID" value="ABA51556.1"/>
    <property type="status" value="ALT_INIT"/>
    <property type="molecule type" value="Genomic_DNA"/>
</dbReference>
<dbReference type="RefSeq" id="WP_004529043.1">
    <property type="nucleotide sequence ID" value="NC_007435.1"/>
</dbReference>
<dbReference type="SMR" id="Q3JK86"/>
<dbReference type="EnsemblBacteria" id="ABA51556">
    <property type="protein sequence ID" value="ABA51556"/>
    <property type="gene ID" value="BURPS1710b_A0859"/>
</dbReference>
<dbReference type="KEGG" id="bpm:BURPS1710b_A0859"/>
<dbReference type="HOGENOM" id="CLU_053300_0_0_4"/>
<dbReference type="UniPathway" id="UPA00050">
    <property type="reaction ID" value="UER00064"/>
</dbReference>
<dbReference type="Proteomes" id="UP000002700">
    <property type="component" value="Chromosome II"/>
</dbReference>
<dbReference type="GO" id="GO:0005524">
    <property type="term" value="F:ATP binding"/>
    <property type="evidence" value="ECO:0007669"/>
    <property type="project" value="UniProtKB-KW"/>
</dbReference>
<dbReference type="GO" id="GO:0004413">
    <property type="term" value="F:homoserine kinase activity"/>
    <property type="evidence" value="ECO:0007669"/>
    <property type="project" value="UniProtKB-UniRule"/>
</dbReference>
<dbReference type="GO" id="GO:0009088">
    <property type="term" value="P:threonine biosynthetic process"/>
    <property type="evidence" value="ECO:0007669"/>
    <property type="project" value="UniProtKB-UniRule"/>
</dbReference>
<dbReference type="CDD" id="cd05153">
    <property type="entry name" value="HomoserineK_II"/>
    <property type="match status" value="1"/>
</dbReference>
<dbReference type="Gene3D" id="3.90.1200.10">
    <property type="match status" value="1"/>
</dbReference>
<dbReference type="Gene3D" id="3.30.200.20">
    <property type="entry name" value="Phosphorylase Kinase, domain 1"/>
    <property type="match status" value="1"/>
</dbReference>
<dbReference type="HAMAP" id="MF_00301">
    <property type="entry name" value="Homoser_kinase_2"/>
    <property type="match status" value="1"/>
</dbReference>
<dbReference type="InterPro" id="IPR002575">
    <property type="entry name" value="Aminoglycoside_PTrfase"/>
</dbReference>
<dbReference type="InterPro" id="IPR005280">
    <property type="entry name" value="Homoserine_kinase_II"/>
</dbReference>
<dbReference type="InterPro" id="IPR011009">
    <property type="entry name" value="Kinase-like_dom_sf"/>
</dbReference>
<dbReference type="InterPro" id="IPR050249">
    <property type="entry name" value="Pseudomonas-type_ThrB"/>
</dbReference>
<dbReference type="NCBIfam" id="NF003558">
    <property type="entry name" value="PRK05231.1"/>
    <property type="match status" value="1"/>
</dbReference>
<dbReference type="NCBIfam" id="TIGR00938">
    <property type="entry name" value="thrB_alt"/>
    <property type="match status" value="1"/>
</dbReference>
<dbReference type="PANTHER" id="PTHR21064:SF6">
    <property type="entry name" value="AMINOGLYCOSIDE PHOSPHOTRANSFERASE DOMAIN-CONTAINING PROTEIN"/>
    <property type="match status" value="1"/>
</dbReference>
<dbReference type="PANTHER" id="PTHR21064">
    <property type="entry name" value="AMINOGLYCOSIDE PHOSPHOTRANSFERASE DOMAIN-CONTAINING PROTEIN-RELATED"/>
    <property type="match status" value="1"/>
</dbReference>
<dbReference type="Pfam" id="PF01636">
    <property type="entry name" value="APH"/>
    <property type="match status" value="1"/>
</dbReference>
<dbReference type="SUPFAM" id="SSF56112">
    <property type="entry name" value="Protein kinase-like (PK-like)"/>
    <property type="match status" value="1"/>
</dbReference>
<comment type="catalytic activity">
    <reaction evidence="1">
        <text>L-homoserine + ATP = O-phospho-L-homoserine + ADP + H(+)</text>
        <dbReference type="Rhea" id="RHEA:13985"/>
        <dbReference type="ChEBI" id="CHEBI:15378"/>
        <dbReference type="ChEBI" id="CHEBI:30616"/>
        <dbReference type="ChEBI" id="CHEBI:57476"/>
        <dbReference type="ChEBI" id="CHEBI:57590"/>
        <dbReference type="ChEBI" id="CHEBI:456216"/>
        <dbReference type="EC" id="2.7.1.39"/>
    </reaction>
</comment>
<comment type="pathway">
    <text evidence="1">Amino-acid biosynthesis; L-threonine biosynthesis; L-threonine from L-aspartate: step 4/5.</text>
</comment>
<comment type="similarity">
    <text evidence="1">Belongs to the pseudomonas-type ThrB family.</text>
</comment>
<comment type="sequence caution" evidence="2">
    <conflict type="erroneous initiation">
        <sequence resource="EMBL-CDS" id="ABA51556"/>
    </conflict>
</comment>
<evidence type="ECO:0000255" key="1">
    <source>
        <dbReference type="HAMAP-Rule" id="MF_00301"/>
    </source>
</evidence>
<evidence type="ECO:0000305" key="2"/>
<organism>
    <name type="scientific">Burkholderia pseudomallei (strain 1710b)</name>
    <dbReference type="NCBI Taxonomy" id="320372"/>
    <lineage>
        <taxon>Bacteria</taxon>
        <taxon>Pseudomonadati</taxon>
        <taxon>Pseudomonadota</taxon>
        <taxon>Betaproteobacteria</taxon>
        <taxon>Burkholderiales</taxon>
        <taxon>Burkholderiaceae</taxon>
        <taxon>Burkholderia</taxon>
        <taxon>pseudomallei group</taxon>
    </lineage>
</organism>
<protein>
    <recommendedName>
        <fullName evidence="1">Homoserine kinase</fullName>
        <shortName evidence="1">HK</shortName>
        <shortName evidence="1">HSK</shortName>
        <ecNumber evidence="1">2.7.1.39</ecNumber>
    </recommendedName>
</protein>
<name>KHSE_BURP1</name>
<feature type="chain" id="PRO_0000322239" description="Homoserine kinase">
    <location>
        <begin position="1"/>
        <end position="331"/>
    </location>
</feature>
<reference key="1">
    <citation type="journal article" date="2010" name="Genome Biol. Evol.">
        <title>Continuing evolution of Burkholderia mallei through genome reduction and large-scale rearrangements.</title>
        <authorList>
            <person name="Losada L."/>
            <person name="Ronning C.M."/>
            <person name="DeShazer D."/>
            <person name="Woods D."/>
            <person name="Fedorova N."/>
            <person name="Kim H.S."/>
            <person name="Shabalina S.A."/>
            <person name="Pearson T.R."/>
            <person name="Brinkac L."/>
            <person name="Tan P."/>
            <person name="Nandi T."/>
            <person name="Crabtree J."/>
            <person name="Badger J."/>
            <person name="Beckstrom-Sternberg S."/>
            <person name="Saqib M."/>
            <person name="Schutzer S.E."/>
            <person name="Keim P."/>
            <person name="Nierman W.C."/>
        </authorList>
    </citation>
    <scope>NUCLEOTIDE SEQUENCE [LARGE SCALE GENOMIC DNA]</scope>
    <source>
        <strain>1710b</strain>
    </source>
</reference>
<keyword id="KW-0028">Amino-acid biosynthesis</keyword>
<keyword id="KW-0067">ATP-binding</keyword>
<keyword id="KW-0418">Kinase</keyword>
<keyword id="KW-0547">Nucleotide-binding</keyword>
<keyword id="KW-0791">Threonine biosynthesis</keyword>
<keyword id="KW-0808">Transferase</keyword>